<proteinExistence type="evidence at transcript level"/>
<reference key="1">
    <citation type="journal article" date="1989" name="Biochem. Med. Metab. Biol.">
        <title>Synthesis and characterization of a bovine hexokinase 1 cDNA probe by mixed oligonucleotide primed amplification of cDNA using high complexity primer mixtures.</title>
        <authorList>
            <person name="Griffin L.D."/>
            <person name="Macgregor G.R."/>
            <person name="Muzny D.M."/>
            <person name="Harter J."/>
            <person name="Cook R.G."/>
            <person name="McCabe E.R."/>
        </authorList>
    </citation>
    <scope>NUCLEOTIDE SEQUENCE [MRNA]</scope>
</reference>
<reference key="2">
    <citation type="journal article" date="1991" name="Genomics">
        <title>Mammalian hexokinase 1: evolutionary conservation and structure to function analysis.</title>
        <authorList>
            <person name="Griffin L.D."/>
            <person name="Gelb B.D."/>
            <person name="Wheeler D.A."/>
            <person name="Davison D."/>
            <person name="Adams V."/>
            <person name="McCabe E.R."/>
        </authorList>
    </citation>
    <scope>NUCLEOTIDE SEQUENCE [MRNA]</scope>
</reference>
<dbReference type="EC" id="2.7.1.1" evidence="3"/>
<dbReference type="EMBL" id="M65140">
    <property type="protein sequence ID" value="AAA51661.1"/>
    <property type="molecule type" value="mRNA"/>
</dbReference>
<dbReference type="PIR" id="A55277">
    <property type="entry name" value="A55277"/>
</dbReference>
<dbReference type="SMR" id="P27595"/>
<dbReference type="FunCoup" id="P27595">
    <property type="interactions" value="102"/>
</dbReference>
<dbReference type="STRING" id="9913.ENSBTAP00000063116"/>
<dbReference type="PaxDb" id="9913-ENSBTAP00000016432"/>
<dbReference type="eggNOG" id="KOG1369">
    <property type="taxonomic scope" value="Eukaryota"/>
</dbReference>
<dbReference type="InParanoid" id="P27595"/>
<dbReference type="SABIO-RK" id="P27595"/>
<dbReference type="UniPathway" id="UPA00109">
    <property type="reaction ID" value="UER00180"/>
</dbReference>
<dbReference type="UniPathway" id="UPA00242"/>
<dbReference type="Proteomes" id="UP000009136">
    <property type="component" value="Unplaced"/>
</dbReference>
<dbReference type="GO" id="GO:0005829">
    <property type="term" value="C:cytosol"/>
    <property type="evidence" value="ECO:0000318"/>
    <property type="project" value="GO_Central"/>
</dbReference>
<dbReference type="GO" id="GO:0005741">
    <property type="term" value="C:mitochondrial outer membrane"/>
    <property type="evidence" value="ECO:0007669"/>
    <property type="project" value="UniProtKB-SubCell"/>
</dbReference>
<dbReference type="GO" id="GO:0005739">
    <property type="term" value="C:mitochondrion"/>
    <property type="evidence" value="ECO:0000318"/>
    <property type="project" value="GO_Central"/>
</dbReference>
<dbReference type="GO" id="GO:0005524">
    <property type="term" value="F:ATP binding"/>
    <property type="evidence" value="ECO:0007669"/>
    <property type="project" value="UniProtKB-KW"/>
</dbReference>
<dbReference type="GO" id="GO:0005536">
    <property type="term" value="F:D-glucose binding"/>
    <property type="evidence" value="ECO:0007669"/>
    <property type="project" value="InterPro"/>
</dbReference>
<dbReference type="GO" id="GO:0008865">
    <property type="term" value="F:fructokinase activity"/>
    <property type="evidence" value="ECO:0000250"/>
    <property type="project" value="UniProtKB"/>
</dbReference>
<dbReference type="GO" id="GO:0004340">
    <property type="term" value="F:glucokinase activity"/>
    <property type="evidence" value="ECO:0000250"/>
    <property type="project" value="UniProtKB"/>
</dbReference>
<dbReference type="GO" id="GO:0047931">
    <property type="term" value="F:glucosamine kinase activity"/>
    <property type="evidence" value="ECO:0007669"/>
    <property type="project" value="RHEA"/>
</dbReference>
<dbReference type="GO" id="GO:0019158">
    <property type="term" value="F:mannokinase activity"/>
    <property type="evidence" value="ECO:0000250"/>
    <property type="project" value="UniProtKB"/>
</dbReference>
<dbReference type="GO" id="GO:0006002">
    <property type="term" value="P:fructose 6-phosphate metabolic process"/>
    <property type="evidence" value="ECO:0000250"/>
    <property type="project" value="UniProtKB"/>
</dbReference>
<dbReference type="GO" id="GO:0051156">
    <property type="term" value="P:glucose 6-phosphate metabolic process"/>
    <property type="evidence" value="ECO:0000250"/>
    <property type="project" value="UniProtKB"/>
</dbReference>
<dbReference type="GO" id="GO:0006006">
    <property type="term" value="P:glucose metabolic process"/>
    <property type="evidence" value="ECO:0000318"/>
    <property type="project" value="GO_Central"/>
</dbReference>
<dbReference type="GO" id="GO:0006096">
    <property type="term" value="P:glycolytic process"/>
    <property type="evidence" value="ECO:0000318"/>
    <property type="project" value="GO_Central"/>
</dbReference>
<dbReference type="GO" id="GO:0006954">
    <property type="term" value="P:inflammatory response"/>
    <property type="evidence" value="ECO:0007669"/>
    <property type="project" value="UniProtKB-KW"/>
</dbReference>
<dbReference type="GO" id="GO:0045087">
    <property type="term" value="P:innate immune response"/>
    <property type="evidence" value="ECO:0007669"/>
    <property type="project" value="UniProtKB-KW"/>
</dbReference>
<dbReference type="GO" id="GO:0001678">
    <property type="term" value="P:intracellular glucose homeostasis"/>
    <property type="evidence" value="ECO:0000318"/>
    <property type="project" value="GO_Central"/>
</dbReference>
<dbReference type="GO" id="GO:0006013">
    <property type="term" value="P:mannose metabolic process"/>
    <property type="evidence" value="ECO:0000250"/>
    <property type="project" value="UniProtKB"/>
</dbReference>
<dbReference type="FunFam" id="3.30.420.40:FF:000015">
    <property type="entry name" value="Hexokinase 1"/>
    <property type="match status" value="2"/>
</dbReference>
<dbReference type="FunFam" id="3.40.367.20:FF:000001">
    <property type="entry name" value="Hexokinase 1"/>
    <property type="match status" value="1"/>
</dbReference>
<dbReference type="FunFam" id="3.40.367.20:FF:000020">
    <property type="entry name" value="Hexokinase-1"/>
    <property type="match status" value="1"/>
</dbReference>
<dbReference type="Gene3D" id="3.30.420.40">
    <property type="match status" value="2"/>
</dbReference>
<dbReference type="Gene3D" id="3.40.367.20">
    <property type="match status" value="2"/>
</dbReference>
<dbReference type="InterPro" id="IPR043129">
    <property type="entry name" value="ATPase_NBD"/>
</dbReference>
<dbReference type="InterPro" id="IPR001312">
    <property type="entry name" value="Hexokinase"/>
</dbReference>
<dbReference type="InterPro" id="IPR019807">
    <property type="entry name" value="Hexokinase_BS"/>
</dbReference>
<dbReference type="InterPro" id="IPR022673">
    <property type="entry name" value="Hexokinase_C"/>
</dbReference>
<dbReference type="InterPro" id="IPR022672">
    <property type="entry name" value="Hexokinase_N"/>
</dbReference>
<dbReference type="PANTHER" id="PTHR19443">
    <property type="entry name" value="HEXOKINASE"/>
    <property type="match status" value="1"/>
</dbReference>
<dbReference type="PANTHER" id="PTHR19443:SF80">
    <property type="entry name" value="HEXOKINASE-1"/>
    <property type="match status" value="1"/>
</dbReference>
<dbReference type="Pfam" id="PF00349">
    <property type="entry name" value="Hexokinase_1"/>
    <property type="match status" value="2"/>
</dbReference>
<dbReference type="Pfam" id="PF03727">
    <property type="entry name" value="Hexokinase_2"/>
    <property type="match status" value="2"/>
</dbReference>
<dbReference type="PRINTS" id="PR00475">
    <property type="entry name" value="HEXOKINASE"/>
</dbReference>
<dbReference type="SUPFAM" id="SSF53067">
    <property type="entry name" value="Actin-like ATPase domain"/>
    <property type="match status" value="4"/>
</dbReference>
<dbReference type="PROSITE" id="PS00378">
    <property type="entry name" value="HEXOKINASE_1"/>
    <property type="match status" value="2"/>
</dbReference>
<dbReference type="PROSITE" id="PS51748">
    <property type="entry name" value="HEXOKINASE_2"/>
    <property type="match status" value="2"/>
</dbReference>
<protein>
    <recommendedName>
        <fullName evidence="6">Hexokinase-1</fullName>
        <ecNumber evidence="3">2.7.1.1</ecNumber>
    </recommendedName>
    <alternativeName>
        <fullName evidence="3">Brain form hexokinase</fullName>
    </alternativeName>
    <alternativeName>
        <fullName evidence="5">Hexokinase type I</fullName>
        <shortName evidence="5">HK I</shortName>
    </alternativeName>
</protein>
<comment type="function">
    <text evidence="1 3">Catalyzes the phosphorylation of various hexoses, such as D-glucose, D-glucosamine, D-fructose, D-mannose and 2-deoxy-D-glucose, to hexose 6-phosphate (D-glucose 6-phosphate, D-glucosamine 6-phosphate, D-fructose 6-phosphate, D-mannose 6-phosphate and 2-deoxy-D-glucose 6-phosphate, respectively). Does not phosphorylate N-acetyl-D-glucosamine (By similarity). Mediates the initial step of glycolysis by catalyzing phosphorylation of D-glucose to D-glucose 6-phosphate (By similarity). Involved in innate immunity and inflammation by acting as a pattern recognition receptor for bacterial peptidoglycan. When released in the cytosol, N-acetyl-D-glucosamine component of bacterial peptidoglycan inhibits the hexokinase activity of HK1 and causes its dissociation from mitochondrial outer membrane, thereby activating the NLRP3 inflammasome (By similarity).</text>
</comment>
<comment type="catalytic activity">
    <reaction evidence="3">
        <text>a D-hexose + ATP = a D-hexose 6-phosphate + ADP + H(+)</text>
        <dbReference type="Rhea" id="RHEA:22740"/>
        <dbReference type="ChEBI" id="CHEBI:4194"/>
        <dbReference type="ChEBI" id="CHEBI:15378"/>
        <dbReference type="ChEBI" id="CHEBI:30616"/>
        <dbReference type="ChEBI" id="CHEBI:229467"/>
        <dbReference type="ChEBI" id="CHEBI:456216"/>
        <dbReference type="EC" id="2.7.1.1"/>
    </reaction>
    <physiologicalReaction direction="left-to-right" evidence="3">
        <dbReference type="Rhea" id="RHEA:22741"/>
    </physiologicalReaction>
</comment>
<comment type="catalytic activity">
    <reaction evidence="1">
        <text>D-fructose + ATP = D-fructose 6-phosphate + ADP + H(+)</text>
        <dbReference type="Rhea" id="RHEA:16125"/>
        <dbReference type="ChEBI" id="CHEBI:15378"/>
        <dbReference type="ChEBI" id="CHEBI:30616"/>
        <dbReference type="ChEBI" id="CHEBI:37721"/>
        <dbReference type="ChEBI" id="CHEBI:61527"/>
        <dbReference type="ChEBI" id="CHEBI:456216"/>
        <dbReference type="EC" id="2.7.1.1"/>
    </reaction>
    <physiologicalReaction direction="left-to-right" evidence="1">
        <dbReference type="Rhea" id="RHEA:16126"/>
    </physiologicalReaction>
</comment>
<comment type="catalytic activity">
    <reaction evidence="1">
        <text>D-glucose + ATP = D-glucose 6-phosphate + ADP + H(+)</text>
        <dbReference type="Rhea" id="RHEA:17825"/>
        <dbReference type="ChEBI" id="CHEBI:4167"/>
        <dbReference type="ChEBI" id="CHEBI:15378"/>
        <dbReference type="ChEBI" id="CHEBI:30616"/>
        <dbReference type="ChEBI" id="CHEBI:61548"/>
        <dbReference type="ChEBI" id="CHEBI:456216"/>
        <dbReference type="EC" id="2.7.1.1"/>
    </reaction>
    <physiologicalReaction direction="left-to-right" evidence="1">
        <dbReference type="Rhea" id="RHEA:17826"/>
    </physiologicalReaction>
</comment>
<comment type="catalytic activity">
    <reaction evidence="1">
        <text>D-mannose + ATP = D-mannose 6-phosphate + ADP + H(+)</text>
        <dbReference type="Rhea" id="RHEA:11028"/>
        <dbReference type="ChEBI" id="CHEBI:4208"/>
        <dbReference type="ChEBI" id="CHEBI:15378"/>
        <dbReference type="ChEBI" id="CHEBI:30616"/>
        <dbReference type="ChEBI" id="CHEBI:58735"/>
        <dbReference type="ChEBI" id="CHEBI:456216"/>
        <dbReference type="EC" id="2.7.1.1"/>
    </reaction>
    <physiologicalReaction direction="left-to-right" evidence="1">
        <dbReference type="Rhea" id="RHEA:11029"/>
    </physiologicalReaction>
</comment>
<comment type="catalytic activity">
    <reaction evidence="3">
        <text>D-glucosamine + ATP = D-glucosamine 6-phosphate + ADP + H(+)</text>
        <dbReference type="Rhea" id="RHEA:10948"/>
        <dbReference type="ChEBI" id="CHEBI:15378"/>
        <dbReference type="ChEBI" id="CHEBI:30616"/>
        <dbReference type="ChEBI" id="CHEBI:58723"/>
        <dbReference type="ChEBI" id="CHEBI:58725"/>
        <dbReference type="ChEBI" id="CHEBI:456216"/>
        <dbReference type="EC" id="2.7.1.1"/>
    </reaction>
    <physiologicalReaction direction="left-to-right" evidence="3">
        <dbReference type="Rhea" id="RHEA:10949"/>
    </physiologicalReaction>
</comment>
<comment type="activity regulation">
    <text evidence="3">Hexokinase is an allosteric enzyme inhibited by its product D-glucose 6-phosphate. Hexokinase activity is inhibited by N-acetyl-D-glucosamine.</text>
</comment>
<comment type="pathway">
    <text evidence="3">Carbohydrate metabolism; hexose metabolism.</text>
</comment>
<comment type="pathway">
    <text evidence="1">Carbohydrate degradation; glycolysis; D-glyceraldehyde 3-phosphate and glycerone phosphate from D-glucose: step 1/4.</text>
</comment>
<comment type="subunit">
    <text evidence="2 3">Monomer (By similarity). Interacts with RABL2/RABL2A; binds preferentially to GTP-bound RABL2 (By similarity). Interacts with VDAC1. The HK1-VDAC1 complex interacts with ATF2 (By similarity). Interacts (via N-terminal spermatogenic cell-specific region) with PFKM (via C-terminus) (By similarity). Interacts with SMAD5 (By similarity).</text>
</comment>
<comment type="subcellular location">
    <subcellularLocation>
        <location evidence="3">Mitochondrion outer membrane</location>
        <topology evidence="3">Peripheral membrane protein</topology>
    </subcellularLocation>
    <subcellularLocation>
        <location evidence="3">Cytoplasm</location>
        <location evidence="3">Cytosol</location>
    </subcellularLocation>
    <text evidence="3">The mitochondrial-binding peptide (MBP) region promotes association with the mitochondrial outer membrane. Dissociates from the mitochondrial outer membrane following inhibition by N-acetyl-D-glucosamine, leading to relocation to the cytosol.</text>
</comment>
<comment type="domain">
    <text evidence="3">The N- and C-terminal halves of this hexokinase contain a hexokinase domain. The catalytic activity is associated with the C-terminus while regulatory function is associated with the N-terminus. Each domain can bind a single D-glucose and D-glucose 6-phosphate molecule.</text>
</comment>
<comment type="similarity">
    <text evidence="4 6">Belongs to the hexokinase family.</text>
</comment>
<gene>
    <name evidence="3" type="primary">HK1</name>
</gene>
<accession>P27595</accession>
<name>HXK1_BOVIN</name>
<evidence type="ECO:0000250" key="1">
    <source>
        <dbReference type="UniProtKB" id="P05708"/>
    </source>
</evidence>
<evidence type="ECO:0000250" key="2">
    <source>
        <dbReference type="UniProtKB" id="P17710"/>
    </source>
</evidence>
<evidence type="ECO:0000250" key="3">
    <source>
        <dbReference type="UniProtKB" id="P19367"/>
    </source>
</evidence>
<evidence type="ECO:0000255" key="4">
    <source>
        <dbReference type="PROSITE-ProRule" id="PRU01084"/>
    </source>
</evidence>
<evidence type="ECO:0000303" key="5">
    <source>
    </source>
</evidence>
<evidence type="ECO:0000305" key="6"/>
<sequence>MIAAQLLAYYFTELKDDQVKKIDKYLYAMRLSDETLLDIMNRFKKEMKNGLSRDFNPTATVKMLPTFVRSIPDGSEKGDFIALDLGGSSFRILRVQVNHEQNRPVHMESEVYDTPENIMHGSGSQLFDHVLECLGDFMEKKKIKDKKLPVGFTFSFPCRQSKIDQAILITWTKRFKARGAEGNYVVKLLDKAIKKRGDYDANIVAVVNDTVGTMIDCGYDDQHCEVGLIIGTGTNACYMEELRQIDFGWGDDGRMCINTEWGDLGDDGSLEDIRKEFDREFRRGSLNPGKQRFEKMVSGRYMEDVVRLVLVKMAKEGLLFEGRITPELLTRGKFNTSDVSAIEKDKEGLHNAKEILTRLGVERSDDDCVSVQHVCTIVSFRSANLVAATLGAILNRLRDNKSTPRLRTTVRVDGSLYKTHPQYSRRFHKTLRRLVPDSDVRFLLSESGTGKGAAMVTAVAYRLAEQHRQIEETLAHFRLSKQTLMEVKKRLRTEMEMGLRKETNSNATVNMLPSFLRSIPDGTEDGDFLALDLGGTNFRVLLVKIRSGKKSTVEMHNKIYRIPIEIMQGTGEELFDHIVSCISDFLDYMGIKGPRMPLGFTFSFPCQQTSLDAGILITWTKGFKATDCVGHDVVTLLRDAVKRREEFDLDVVAVVNDTVGTMMTCAYEEPTCEVGLIVGTGSNACYMEEMKNVEMVEGNQRQMCINMEWGAFGDNGCSDDIRTDFDKVVDEYSLNSGNQRFENMISGIYLGEIVRNILIDFTKKGFLFRGQISEPLKTRGIFETKFLSQIESDRLALLQVRAILQQLGLNSTCDDSILVKTVCGVVSKRAAQLCGAGMAAVVEKIRENRGLDRLNVTVGVDGTLYKLHPQFSRIMHQTVKELSPKCNVSFLLSEDGSGKGAALITAVGVRLRGESAIS</sequence>
<organism>
    <name type="scientific">Bos taurus</name>
    <name type="common">Bovine</name>
    <dbReference type="NCBI Taxonomy" id="9913"/>
    <lineage>
        <taxon>Eukaryota</taxon>
        <taxon>Metazoa</taxon>
        <taxon>Chordata</taxon>
        <taxon>Craniata</taxon>
        <taxon>Vertebrata</taxon>
        <taxon>Euteleostomi</taxon>
        <taxon>Mammalia</taxon>
        <taxon>Eutheria</taxon>
        <taxon>Laurasiatheria</taxon>
        <taxon>Artiodactyla</taxon>
        <taxon>Ruminantia</taxon>
        <taxon>Pecora</taxon>
        <taxon>Bovidae</taxon>
        <taxon>Bovinae</taxon>
        <taxon>Bos</taxon>
    </lineage>
</organism>
<feature type="chain" id="PRO_0000197584" description="Hexokinase-1">
    <location>
        <begin position="1"/>
        <end position="918"/>
    </location>
</feature>
<feature type="domain" description="Hexokinase 1" evidence="4">
    <location>
        <begin position="16"/>
        <end position="458"/>
    </location>
</feature>
<feature type="domain" description="Hexokinase 2" evidence="4">
    <location>
        <begin position="464"/>
        <end position="906"/>
    </location>
</feature>
<feature type="region of interest" description="Mitochondrial-binding peptide (MBP)" evidence="3">
    <location>
        <begin position="1"/>
        <end position="10"/>
    </location>
</feature>
<feature type="region of interest" description="Hexokinase small subdomain 1" evidence="4">
    <location>
        <begin position="73"/>
        <end position="207"/>
    </location>
</feature>
<feature type="region of interest" description="Hexokinase large subdomain 1" evidence="4">
    <location>
        <begin position="208"/>
        <end position="447"/>
    </location>
</feature>
<feature type="region of interest" description="Hexokinase small subdomain 2" evidence="4">
    <location>
        <begin position="521"/>
        <end position="655"/>
    </location>
</feature>
<feature type="region of interest" description="Hexokinase large subdomain 2" evidence="4">
    <location>
        <begin position="656"/>
        <end position="895"/>
    </location>
</feature>
<feature type="binding site" evidence="3">
    <location>
        <position position="30"/>
    </location>
    <ligand>
        <name>ATP</name>
        <dbReference type="ChEBI" id="CHEBI:30616"/>
        <label>1</label>
    </ligand>
</feature>
<feature type="binding site" evidence="3">
    <location>
        <begin position="84"/>
        <end position="91"/>
    </location>
    <ligand>
        <name>D-glucose 6-phosphate</name>
        <dbReference type="ChEBI" id="CHEBI:61548"/>
        <label>1</label>
    </ligand>
</feature>
<feature type="binding site" evidence="3">
    <location>
        <begin position="84"/>
        <end position="89"/>
    </location>
    <ligand>
        <name>ATP</name>
        <dbReference type="ChEBI" id="CHEBI:30616"/>
        <label>1</label>
    </ligand>
</feature>
<feature type="binding site" evidence="3">
    <location>
        <position position="155"/>
    </location>
    <ligand>
        <name>D-glucose</name>
        <dbReference type="ChEBI" id="CHEBI:4167"/>
        <label>1</label>
    </ligand>
</feature>
<feature type="binding site" evidence="3">
    <location>
        <begin position="172"/>
        <end position="173"/>
    </location>
    <ligand>
        <name>D-glucose</name>
        <dbReference type="ChEBI" id="CHEBI:4167"/>
        <label>1</label>
    </ligand>
</feature>
<feature type="binding site" evidence="3">
    <location>
        <begin position="208"/>
        <end position="209"/>
    </location>
    <ligand>
        <name>D-glucose</name>
        <dbReference type="ChEBI" id="CHEBI:4167"/>
        <label>1</label>
    </ligand>
</feature>
<feature type="binding site" evidence="3">
    <location>
        <position position="209"/>
    </location>
    <ligand>
        <name>D-glucose 6-phosphate</name>
        <dbReference type="ChEBI" id="CHEBI:61548"/>
        <label>1</label>
    </ligand>
</feature>
<feature type="binding site" evidence="3">
    <location>
        <position position="232"/>
    </location>
    <ligand>
        <name>D-glucose 6-phosphate</name>
        <dbReference type="ChEBI" id="CHEBI:61548"/>
        <label>1</label>
    </ligand>
</feature>
<feature type="binding site" evidence="3">
    <location>
        <position position="235"/>
    </location>
    <ligand>
        <name>D-glucose</name>
        <dbReference type="ChEBI" id="CHEBI:4167"/>
        <label>1</label>
    </ligand>
</feature>
<feature type="binding site" evidence="3">
    <location>
        <position position="260"/>
    </location>
    <ligand>
        <name>D-glucose</name>
        <dbReference type="ChEBI" id="CHEBI:4167"/>
        <label>1</label>
    </ligand>
</feature>
<feature type="binding site" evidence="3">
    <location>
        <begin position="291"/>
        <end position="294"/>
    </location>
    <ligand>
        <name>D-glucose</name>
        <dbReference type="ChEBI" id="CHEBI:4167"/>
        <label>1</label>
    </ligand>
</feature>
<feature type="binding site" evidence="3">
    <location>
        <begin position="413"/>
        <end position="415"/>
    </location>
    <ligand>
        <name>D-glucose 6-phosphate</name>
        <dbReference type="ChEBI" id="CHEBI:61548"/>
        <label>1</label>
    </ligand>
</feature>
<feature type="binding site" evidence="3">
    <location>
        <begin position="425"/>
        <end position="426"/>
    </location>
    <ligand>
        <name>ATP</name>
        <dbReference type="ChEBI" id="CHEBI:30616"/>
        <label>1</label>
    </ligand>
</feature>
<feature type="binding site" evidence="3">
    <location>
        <begin position="532"/>
        <end position="537"/>
    </location>
    <ligand>
        <name>ATP</name>
        <dbReference type="ChEBI" id="CHEBI:30616"/>
        <label>2</label>
    </ligand>
</feature>
<feature type="binding site" evidence="3">
    <location>
        <begin position="532"/>
        <end position="536"/>
    </location>
    <ligand>
        <name>D-glucose 6-phosphate</name>
        <dbReference type="ChEBI" id="CHEBI:61548"/>
        <label>2</label>
    </ligand>
</feature>
<feature type="binding site" evidence="3">
    <location>
        <begin position="603"/>
        <end position="604"/>
    </location>
    <ligand>
        <name>D-glucose</name>
        <dbReference type="ChEBI" id="CHEBI:4167"/>
        <label>2</label>
    </ligand>
</feature>
<feature type="binding site" evidence="3">
    <location>
        <begin position="620"/>
        <end position="621"/>
    </location>
    <ligand>
        <name>D-glucose</name>
        <dbReference type="ChEBI" id="CHEBI:4167"/>
        <label>2</label>
    </ligand>
</feature>
<feature type="binding site" evidence="3">
    <location>
        <begin position="656"/>
        <end position="657"/>
    </location>
    <ligand>
        <name>D-glucose</name>
        <dbReference type="ChEBI" id="CHEBI:4167"/>
        <label>2</label>
    </ligand>
</feature>
<feature type="binding site" evidence="3">
    <location>
        <position position="657"/>
    </location>
    <ligand>
        <name>D-glucose 6-phosphate</name>
        <dbReference type="ChEBI" id="CHEBI:61548"/>
        <label>2</label>
    </ligand>
</feature>
<feature type="binding site" evidence="3">
    <location>
        <position position="680"/>
    </location>
    <ligand>
        <name>ATP</name>
        <dbReference type="ChEBI" id="CHEBI:30616"/>
        <label>2</label>
    </ligand>
</feature>
<feature type="binding site" evidence="3">
    <location>
        <position position="680"/>
    </location>
    <ligand>
        <name>D-glucose 6-phosphate</name>
        <dbReference type="ChEBI" id="CHEBI:61548"/>
        <label>2</label>
    </ligand>
</feature>
<feature type="binding site" evidence="3">
    <location>
        <begin position="682"/>
        <end position="683"/>
    </location>
    <ligand>
        <name>D-glucose</name>
        <dbReference type="ChEBI" id="CHEBI:4167"/>
        <label>2</label>
    </ligand>
</feature>
<feature type="binding site" evidence="3">
    <location>
        <position position="708"/>
    </location>
    <ligand>
        <name>D-glucose</name>
        <dbReference type="ChEBI" id="CHEBI:4167"/>
        <label>2</label>
    </ligand>
</feature>
<feature type="binding site" evidence="3">
    <location>
        <position position="742"/>
    </location>
    <ligand>
        <name>D-glucose</name>
        <dbReference type="ChEBI" id="CHEBI:4167"/>
        <label>2</label>
    </ligand>
</feature>
<feature type="binding site" evidence="3">
    <location>
        <begin position="747"/>
        <end position="748"/>
    </location>
    <ligand>
        <name>ATP</name>
        <dbReference type="ChEBI" id="CHEBI:30616"/>
        <label>2</label>
    </ligand>
</feature>
<feature type="binding site" evidence="3">
    <location>
        <begin position="784"/>
        <end position="788"/>
    </location>
    <ligand>
        <name>ATP</name>
        <dbReference type="ChEBI" id="CHEBI:30616"/>
        <label>2</label>
    </ligand>
</feature>
<feature type="binding site" evidence="3">
    <location>
        <begin position="861"/>
        <end position="863"/>
    </location>
    <ligand>
        <name>D-glucose 6-phosphate</name>
        <dbReference type="ChEBI" id="CHEBI:61548"/>
        <label>2</label>
    </ligand>
</feature>
<feature type="binding site" evidence="3">
    <location>
        <begin position="863"/>
        <end position="867"/>
    </location>
    <ligand>
        <name>ATP</name>
        <dbReference type="ChEBI" id="CHEBI:30616"/>
        <label>2</label>
    </ligand>
</feature>
<feature type="binding site" evidence="3">
    <location>
        <position position="897"/>
    </location>
    <ligand>
        <name>D-glucose 6-phosphate</name>
        <dbReference type="ChEBI" id="CHEBI:61548"/>
        <label>2</label>
    </ligand>
</feature>
<feature type="modified residue" description="N-acetylmethionine" evidence="3">
    <location>
        <position position="1"/>
    </location>
</feature>
<feature type="modified residue" description="Phosphoserine" evidence="1">
    <location>
        <position position="337"/>
    </location>
</feature>
<keyword id="KW-0007">Acetylation</keyword>
<keyword id="KW-0021">Allosteric enzyme</keyword>
<keyword id="KW-0067">ATP-binding</keyword>
<keyword id="KW-0963">Cytoplasm</keyword>
<keyword id="KW-0324">Glycolysis</keyword>
<keyword id="KW-0391">Immunity</keyword>
<keyword id="KW-0395">Inflammatory response</keyword>
<keyword id="KW-0399">Innate immunity</keyword>
<keyword id="KW-0418">Kinase</keyword>
<keyword id="KW-0472">Membrane</keyword>
<keyword id="KW-0496">Mitochondrion</keyword>
<keyword id="KW-1000">Mitochondrion outer membrane</keyword>
<keyword id="KW-0547">Nucleotide-binding</keyword>
<keyword id="KW-0597">Phosphoprotein</keyword>
<keyword id="KW-1185">Reference proteome</keyword>
<keyword id="KW-0677">Repeat</keyword>
<keyword id="KW-0808">Transferase</keyword>